<sequence length="216" mass="24804">MRINTVLFDLDGTLINTNELIISSFLHTLNTYYPNQYKREDVLPFIGPSLHDTFSKIDENKVEEMITSYRKFNHDHHDELVEEYETVYETVRELKRQGYKVGIVTTKARQTVEMGLQLSKLDEFFDVVVTIDDVENVKPHPEPLQKALELLDAKPEEALMVGDNHHDIVGGQNAGTKTAAVSWTLKGRAYLEAYKPDFMLDKMSDLLPILSNMNRS</sequence>
<comment type="function">
    <text evidence="1">Hydrolyzes pyrophosphate formed during P-Ser-HPr dephosphorylation by HPrK/P. Might play a role in controlling the intracellular pyrophosphate pool.</text>
</comment>
<comment type="catalytic activity">
    <reaction evidence="1">
        <text>diphosphate + H2O = 2 phosphate + H(+)</text>
        <dbReference type="Rhea" id="RHEA:24576"/>
        <dbReference type="ChEBI" id="CHEBI:15377"/>
        <dbReference type="ChEBI" id="CHEBI:15378"/>
        <dbReference type="ChEBI" id="CHEBI:33019"/>
        <dbReference type="ChEBI" id="CHEBI:43474"/>
        <dbReference type="EC" id="3.6.1.1"/>
    </reaction>
</comment>
<comment type="cofactor">
    <cofactor evidence="1">
        <name>Mg(2+)</name>
        <dbReference type="ChEBI" id="CHEBI:18420"/>
    </cofactor>
</comment>
<comment type="similarity">
    <text evidence="1">Belongs to the HAD-like hydrolase superfamily. PpaX family.</text>
</comment>
<organism>
    <name type="scientific">Bacillus cereus (strain B4264)</name>
    <dbReference type="NCBI Taxonomy" id="405532"/>
    <lineage>
        <taxon>Bacteria</taxon>
        <taxon>Bacillati</taxon>
        <taxon>Bacillota</taxon>
        <taxon>Bacilli</taxon>
        <taxon>Bacillales</taxon>
        <taxon>Bacillaceae</taxon>
        <taxon>Bacillus</taxon>
        <taxon>Bacillus cereus group</taxon>
    </lineage>
</organism>
<evidence type="ECO:0000255" key="1">
    <source>
        <dbReference type="HAMAP-Rule" id="MF_01250"/>
    </source>
</evidence>
<feature type="chain" id="PRO_1000139925" description="Pyrophosphatase PpaX">
    <location>
        <begin position="1"/>
        <end position="216"/>
    </location>
</feature>
<feature type="active site" description="Nucleophile" evidence="1">
    <location>
        <position position="9"/>
    </location>
</feature>
<reference key="1">
    <citation type="submission" date="2008-10" db="EMBL/GenBank/DDBJ databases">
        <title>Genome sequence of Bacillus cereus B4264.</title>
        <authorList>
            <person name="Dodson R.J."/>
            <person name="Durkin A.S."/>
            <person name="Rosovitz M.J."/>
            <person name="Rasko D.A."/>
            <person name="Hoffmaster A."/>
            <person name="Ravel J."/>
            <person name="Sutton G."/>
        </authorList>
    </citation>
    <scope>NUCLEOTIDE SEQUENCE [LARGE SCALE GENOMIC DNA]</scope>
    <source>
        <strain>B4264</strain>
    </source>
</reference>
<dbReference type="EC" id="3.6.1.1" evidence="1"/>
<dbReference type="EMBL" id="CP001176">
    <property type="protein sequence ID" value="ACK62433.1"/>
    <property type="molecule type" value="Genomic_DNA"/>
</dbReference>
<dbReference type="RefSeq" id="WP_012593369.1">
    <property type="nucleotide sequence ID" value="NC_011725.1"/>
</dbReference>
<dbReference type="SMR" id="B7HEG2"/>
<dbReference type="KEGG" id="bcb:BCB4264_A5280"/>
<dbReference type="HOGENOM" id="CLU_045011_19_3_9"/>
<dbReference type="Proteomes" id="UP000007096">
    <property type="component" value="Chromosome"/>
</dbReference>
<dbReference type="GO" id="GO:0005829">
    <property type="term" value="C:cytosol"/>
    <property type="evidence" value="ECO:0007669"/>
    <property type="project" value="TreeGrafter"/>
</dbReference>
<dbReference type="GO" id="GO:0004427">
    <property type="term" value="F:inorganic diphosphate phosphatase activity"/>
    <property type="evidence" value="ECO:0007669"/>
    <property type="project" value="UniProtKB-UniRule"/>
</dbReference>
<dbReference type="GO" id="GO:0000287">
    <property type="term" value="F:magnesium ion binding"/>
    <property type="evidence" value="ECO:0007669"/>
    <property type="project" value="UniProtKB-UniRule"/>
</dbReference>
<dbReference type="GO" id="GO:0008967">
    <property type="term" value="F:phosphoglycolate phosphatase activity"/>
    <property type="evidence" value="ECO:0007669"/>
    <property type="project" value="TreeGrafter"/>
</dbReference>
<dbReference type="GO" id="GO:0006281">
    <property type="term" value="P:DNA repair"/>
    <property type="evidence" value="ECO:0007669"/>
    <property type="project" value="TreeGrafter"/>
</dbReference>
<dbReference type="CDD" id="cd02616">
    <property type="entry name" value="HAD_PPase"/>
    <property type="match status" value="1"/>
</dbReference>
<dbReference type="FunFam" id="3.40.50.1000:FF:000022">
    <property type="entry name" value="Phosphoglycolate phosphatase"/>
    <property type="match status" value="1"/>
</dbReference>
<dbReference type="FunFam" id="1.10.150.240:FF:000008">
    <property type="entry name" value="Pyrophosphatase PpaX"/>
    <property type="match status" value="1"/>
</dbReference>
<dbReference type="Gene3D" id="3.40.50.1000">
    <property type="entry name" value="HAD superfamily/HAD-like"/>
    <property type="match status" value="1"/>
</dbReference>
<dbReference type="Gene3D" id="1.10.150.240">
    <property type="entry name" value="Putative phosphatase, domain 2"/>
    <property type="match status" value="1"/>
</dbReference>
<dbReference type="HAMAP" id="MF_01250">
    <property type="entry name" value="Pyrophosphat_PpaX"/>
    <property type="match status" value="1"/>
</dbReference>
<dbReference type="InterPro" id="IPR050155">
    <property type="entry name" value="HAD-like_hydrolase_sf"/>
</dbReference>
<dbReference type="InterPro" id="IPR036412">
    <property type="entry name" value="HAD-like_sf"/>
</dbReference>
<dbReference type="InterPro" id="IPR006439">
    <property type="entry name" value="HAD-SF_hydro_IA"/>
</dbReference>
<dbReference type="InterPro" id="IPR006549">
    <property type="entry name" value="HAD-SF_hydro_IIIA"/>
</dbReference>
<dbReference type="InterPro" id="IPR041492">
    <property type="entry name" value="HAD_2"/>
</dbReference>
<dbReference type="InterPro" id="IPR023214">
    <property type="entry name" value="HAD_sf"/>
</dbReference>
<dbReference type="InterPro" id="IPR023198">
    <property type="entry name" value="PGP-like_dom2"/>
</dbReference>
<dbReference type="InterPro" id="IPR023733">
    <property type="entry name" value="Pyrophosphatase_Ppax"/>
</dbReference>
<dbReference type="NCBIfam" id="TIGR01549">
    <property type="entry name" value="HAD-SF-IA-v1"/>
    <property type="match status" value="1"/>
</dbReference>
<dbReference type="NCBIfam" id="TIGR01509">
    <property type="entry name" value="HAD-SF-IA-v3"/>
    <property type="match status" value="1"/>
</dbReference>
<dbReference type="NCBIfam" id="TIGR01662">
    <property type="entry name" value="HAD-SF-IIIA"/>
    <property type="match status" value="1"/>
</dbReference>
<dbReference type="NCBIfam" id="NF009804">
    <property type="entry name" value="PRK13288.1"/>
    <property type="match status" value="1"/>
</dbReference>
<dbReference type="PANTHER" id="PTHR43434">
    <property type="entry name" value="PHOSPHOGLYCOLATE PHOSPHATASE"/>
    <property type="match status" value="1"/>
</dbReference>
<dbReference type="PANTHER" id="PTHR43434:SF26">
    <property type="entry name" value="PYROPHOSPHATASE PPAX"/>
    <property type="match status" value="1"/>
</dbReference>
<dbReference type="Pfam" id="PF13419">
    <property type="entry name" value="HAD_2"/>
    <property type="match status" value="1"/>
</dbReference>
<dbReference type="PRINTS" id="PR00413">
    <property type="entry name" value="HADHALOGNASE"/>
</dbReference>
<dbReference type="SFLD" id="SFLDG01135">
    <property type="entry name" value="C1.5.6:_HAD__Beta-PGM__Phospha"/>
    <property type="match status" value="1"/>
</dbReference>
<dbReference type="SFLD" id="SFLDG01129">
    <property type="entry name" value="C1.5:_HAD__Beta-PGM__Phosphata"/>
    <property type="match status" value="1"/>
</dbReference>
<dbReference type="SUPFAM" id="SSF56784">
    <property type="entry name" value="HAD-like"/>
    <property type="match status" value="1"/>
</dbReference>
<keyword id="KW-0378">Hydrolase</keyword>
<keyword id="KW-0460">Magnesium</keyword>
<accession>B7HEG2</accession>
<name>PPAX_BACC4</name>
<proteinExistence type="inferred from homology"/>
<protein>
    <recommendedName>
        <fullName evidence="1">Pyrophosphatase PpaX</fullName>
        <ecNumber evidence="1">3.6.1.1</ecNumber>
    </recommendedName>
</protein>
<gene>
    <name evidence="1" type="primary">ppaX</name>
    <name type="ordered locus">BCB4264_A5280</name>
</gene>